<dbReference type="EMBL" id="EU401844">
    <property type="protein sequence ID" value="ACC77793.1"/>
    <property type="molecule type" value="Genomic_DNA"/>
</dbReference>
<dbReference type="SMR" id="B5L5Q6"/>
<dbReference type="GO" id="GO:0005576">
    <property type="term" value="C:extracellular region"/>
    <property type="evidence" value="ECO:0007669"/>
    <property type="project" value="UniProtKB-SubCell"/>
</dbReference>
<dbReference type="GO" id="GO:0004867">
    <property type="term" value="F:serine-type endopeptidase inhibitor activity"/>
    <property type="evidence" value="ECO:0007669"/>
    <property type="project" value="UniProtKB-KW"/>
</dbReference>
<dbReference type="FunFam" id="4.10.410.10:FF:000020">
    <property type="entry name" value="Collagen, type VI, alpha 3"/>
    <property type="match status" value="1"/>
</dbReference>
<dbReference type="Gene3D" id="4.10.410.10">
    <property type="entry name" value="Pancreatic trypsin inhibitor Kunitz domain"/>
    <property type="match status" value="1"/>
</dbReference>
<dbReference type="InterPro" id="IPR002223">
    <property type="entry name" value="Kunitz_BPTI"/>
</dbReference>
<dbReference type="InterPro" id="IPR036880">
    <property type="entry name" value="Kunitz_BPTI_sf"/>
</dbReference>
<dbReference type="InterPro" id="IPR020901">
    <property type="entry name" value="Prtase_inh_Kunz-CS"/>
</dbReference>
<dbReference type="InterPro" id="IPR050098">
    <property type="entry name" value="TFPI/VKTCI-like"/>
</dbReference>
<dbReference type="PANTHER" id="PTHR10083">
    <property type="entry name" value="KUNITZ-TYPE PROTEASE INHIBITOR-RELATED"/>
    <property type="match status" value="1"/>
</dbReference>
<dbReference type="Pfam" id="PF00014">
    <property type="entry name" value="Kunitz_BPTI"/>
    <property type="match status" value="1"/>
</dbReference>
<dbReference type="PRINTS" id="PR00759">
    <property type="entry name" value="BASICPTASE"/>
</dbReference>
<dbReference type="SMART" id="SM00131">
    <property type="entry name" value="KU"/>
    <property type="match status" value="1"/>
</dbReference>
<dbReference type="SUPFAM" id="SSF57362">
    <property type="entry name" value="BPTI-like"/>
    <property type="match status" value="1"/>
</dbReference>
<dbReference type="PROSITE" id="PS00280">
    <property type="entry name" value="BPTI_KUNITZ_1"/>
    <property type="match status" value="1"/>
</dbReference>
<dbReference type="PROSITE" id="PS50279">
    <property type="entry name" value="BPTI_KUNITZ_2"/>
    <property type="match status" value="1"/>
</dbReference>
<comment type="function">
    <text evidence="1">Serine protease inhibitor.</text>
</comment>
<comment type="subcellular location">
    <subcellularLocation>
        <location evidence="1">Secreted</location>
    </subcellularLocation>
</comment>
<comment type="tissue specificity">
    <text>Expressed by the venom gland.</text>
</comment>
<comment type="similarity">
    <text evidence="4">Belongs to the venom Kunitz-type family.</text>
</comment>
<name>VKT5_OXYMI</name>
<sequence length="79" mass="8788">MSSGGLLLLLGLLTLWEVLTPVSSKDRPKFYELPADIGPCEDFTGAFHYSPREHECIEFIYGGCEGNANNFNTLEECET</sequence>
<keyword id="KW-1015">Disulfide bond</keyword>
<keyword id="KW-0646">Protease inhibitor</keyword>
<keyword id="KW-0964">Secreted</keyword>
<keyword id="KW-0722">Serine protease inhibitor</keyword>
<keyword id="KW-0732">Signal</keyword>
<organism>
    <name type="scientific">Oxyuranus microlepidotus</name>
    <name type="common">Inland taipan</name>
    <name type="synonym">Diemenia microlepidota</name>
    <dbReference type="NCBI Taxonomy" id="111177"/>
    <lineage>
        <taxon>Eukaryota</taxon>
        <taxon>Metazoa</taxon>
        <taxon>Chordata</taxon>
        <taxon>Craniata</taxon>
        <taxon>Vertebrata</taxon>
        <taxon>Euteleostomi</taxon>
        <taxon>Lepidosauria</taxon>
        <taxon>Squamata</taxon>
        <taxon>Bifurcata</taxon>
        <taxon>Unidentata</taxon>
        <taxon>Episquamata</taxon>
        <taxon>Toxicofera</taxon>
        <taxon>Serpentes</taxon>
        <taxon>Colubroidea</taxon>
        <taxon>Elapidae</taxon>
        <taxon>Hydrophiinae</taxon>
        <taxon>Oxyuranus</taxon>
    </lineage>
</organism>
<reference key="1">
    <citation type="journal article" date="2008" name="Cell. Mol. Life Sci.">
        <title>Common evolution of waprin and Kunitz-like toxin families in Australian venomous snakes.</title>
        <authorList>
            <person name="St Pierre L."/>
            <person name="Earl S.T."/>
            <person name="Filippovich I."/>
            <person name="Sorokina N."/>
            <person name="Masci P.P."/>
            <person name="De Jersey J."/>
            <person name="Lavin M.F."/>
        </authorList>
    </citation>
    <scope>NUCLEOTIDE SEQUENCE [GENOMIC DNA]</scope>
    <source>
        <tissue>Venom gland</tissue>
    </source>
</reference>
<evidence type="ECO:0000250" key="1"/>
<evidence type="ECO:0000255" key="2"/>
<evidence type="ECO:0000255" key="3">
    <source>
        <dbReference type="PROSITE-ProRule" id="PRU00031"/>
    </source>
</evidence>
<evidence type="ECO:0000305" key="4"/>
<feature type="signal peptide" evidence="2">
    <location>
        <begin position="1"/>
        <end position="24"/>
    </location>
</feature>
<feature type="chain" id="PRO_5000395644" description="Kunitz-type serine protease inhibitor microlepidin-5">
    <location>
        <begin position="25"/>
        <end position="79"/>
    </location>
</feature>
<feature type="domain" description="BPTI/Kunitz inhibitor" evidence="3">
    <location>
        <begin position="31"/>
        <end position="79"/>
    </location>
</feature>
<feature type="disulfide bond" evidence="3">
    <location>
        <begin position="40"/>
        <end position="64"/>
    </location>
</feature>
<feature type="disulfide bond" evidence="3">
    <location>
        <begin position="56"/>
        <end position="77"/>
    </location>
</feature>
<accession>B5L5Q6</accession>
<proteinExistence type="inferred from homology"/>
<protein>
    <recommendedName>
        <fullName>Kunitz-type serine protease inhibitor microlepidin-5</fullName>
    </recommendedName>
</protein>